<reference key="1">
    <citation type="journal article" date="2004" name="Proc. Natl. Acad. Sci. U.S.A.">
        <title>Genome sequence of the enterobacterial phytopathogen Erwinia carotovora subsp. atroseptica and characterization of virulence factors.</title>
        <authorList>
            <person name="Bell K.S."/>
            <person name="Sebaihia M."/>
            <person name="Pritchard L."/>
            <person name="Holden M.T.G."/>
            <person name="Hyman L.J."/>
            <person name="Holeva M.C."/>
            <person name="Thomson N.R."/>
            <person name="Bentley S.D."/>
            <person name="Churcher L.J.C."/>
            <person name="Mungall K."/>
            <person name="Atkin R."/>
            <person name="Bason N."/>
            <person name="Brooks K."/>
            <person name="Chillingworth T."/>
            <person name="Clark K."/>
            <person name="Doggett J."/>
            <person name="Fraser A."/>
            <person name="Hance Z."/>
            <person name="Hauser H."/>
            <person name="Jagels K."/>
            <person name="Moule S."/>
            <person name="Norbertczak H."/>
            <person name="Ormond D."/>
            <person name="Price C."/>
            <person name="Quail M.A."/>
            <person name="Sanders M."/>
            <person name="Walker D."/>
            <person name="Whitehead S."/>
            <person name="Salmond G.P.C."/>
            <person name="Birch P.R.J."/>
            <person name="Parkhill J."/>
            <person name="Toth I.K."/>
        </authorList>
    </citation>
    <scope>NUCLEOTIDE SEQUENCE [LARGE SCALE GENOMIC DNA]</scope>
    <source>
        <strain>SCRI 1043 / ATCC BAA-672</strain>
    </source>
</reference>
<comment type="function">
    <text evidence="1">Anaerobic nitric oxide reductase; uses NADH to detoxify nitric oxide (NO), protecting several 4Fe-4S NO-sensitive enzymes. Has at least 2 reductase partners, only one of which (NorW, flavorubredoxin reductase) has been identified. NO probably binds to the di-iron center; electrons enter from the NorW at rubredoxin and are transferred sequentially to the FMN center and the di-iron center. Also able to function as an aerobic oxygen reductase.</text>
</comment>
<comment type="cofactor">
    <cofactor evidence="1">
        <name>Fe cation</name>
        <dbReference type="ChEBI" id="CHEBI:24875"/>
    </cofactor>
    <text evidence="1">Binds 3 Fe cations per monomer.</text>
</comment>
<comment type="cofactor">
    <cofactor evidence="1">
        <name>FMN</name>
        <dbReference type="ChEBI" id="CHEBI:58210"/>
    </cofactor>
    <text evidence="1">Binds 1 FMN per monomer.</text>
</comment>
<comment type="pathway">
    <text evidence="1">Nitrogen metabolism; nitric oxide reduction.</text>
</comment>
<comment type="subunit">
    <text evidence="1">Homotetramer.</text>
</comment>
<comment type="subcellular location">
    <subcellularLocation>
        <location evidence="1">Cytoplasm</location>
    </subcellularLocation>
</comment>
<comment type="similarity">
    <text evidence="1">In the N-terminal section; belongs to the zinc metallo-hydrolase group 3 family.</text>
</comment>
<sequence>MTIHVKNNIHWVGQRDWEVRDFHGTEYKTLQGSSYNSYLIREEKTVLIDTVDHKFSREFVQNLMAEVDLNTIDYIVINHAEEDHAGALSELMARIPNTPIYCTYNAIDSITGHHHHPEWNFHTVKTGDTLDIGNGKQLIFIETPMLHWPDSMMTYMTEDAVLFSNDAFGQHYCDEHLFNDEVDQTELFEQCQRYFANILTPFSRLVTAKIHEVLGFNLPLSMVATSHGVVWRDDPAQIIHLYLKWADSYQEDRITLFYDTMSNNTRMMADAIAQGINDVDPGVAVKIYNVARHDKNEILTQVFRSKGVLVGSSTMNNVMMPKVAAMLEEITGLRFQNKKASAFGSYGWNGGAVDRVQTRLMDAGFETTLALKTKWRPDGSALEVCREHGREIARQWALHPLDNTPARRVISPVKPAATAPQVTTAAQPMSASAESACGCNEVAAPQSATQPTVQSESGCMQCSVCQWIYDPALGEPMQDVTPGTMWSDVPDSFLCPECGLGKDVFNPIR</sequence>
<feature type="chain" id="PRO_0000305591" description="Anaerobic nitric oxide reductase flavorubredoxin">
    <location>
        <begin position="1"/>
        <end position="509"/>
    </location>
</feature>
<feature type="domain" description="Flavodoxin-like" evidence="1">
    <location>
        <begin position="254"/>
        <end position="393"/>
    </location>
</feature>
<feature type="domain" description="Rubredoxin-like" evidence="1">
    <location>
        <begin position="457"/>
        <end position="508"/>
    </location>
</feature>
<feature type="region of interest" description="Zinc metallo-hydrolase">
    <location>
        <begin position="30"/>
        <end position="210"/>
    </location>
</feature>
<feature type="binding site" evidence="1">
    <location>
        <position position="79"/>
    </location>
    <ligand>
        <name>Fe cation</name>
        <dbReference type="ChEBI" id="CHEBI:24875"/>
        <label>1</label>
    </ligand>
</feature>
<feature type="binding site" evidence="1">
    <location>
        <position position="81"/>
    </location>
    <ligand>
        <name>Fe cation</name>
        <dbReference type="ChEBI" id="CHEBI:24875"/>
        <label>1</label>
    </ligand>
</feature>
<feature type="binding site" evidence="1">
    <location>
        <position position="83"/>
    </location>
    <ligand>
        <name>Fe cation</name>
        <dbReference type="ChEBI" id="CHEBI:24875"/>
        <label>2</label>
    </ligand>
</feature>
<feature type="binding site" evidence="1">
    <location>
        <position position="147"/>
    </location>
    <ligand>
        <name>Fe cation</name>
        <dbReference type="ChEBI" id="CHEBI:24875"/>
        <label>1</label>
    </ligand>
</feature>
<feature type="binding site" evidence="1">
    <location>
        <position position="166"/>
    </location>
    <ligand>
        <name>Fe cation</name>
        <dbReference type="ChEBI" id="CHEBI:24875"/>
        <label>1</label>
    </ligand>
</feature>
<feature type="binding site" evidence="1">
    <location>
        <position position="166"/>
    </location>
    <ligand>
        <name>Fe cation</name>
        <dbReference type="ChEBI" id="CHEBI:24875"/>
        <label>2</label>
    </ligand>
</feature>
<feature type="binding site" evidence="1">
    <location>
        <position position="227"/>
    </location>
    <ligand>
        <name>Fe cation</name>
        <dbReference type="ChEBI" id="CHEBI:24875"/>
        <label>2</label>
    </ligand>
</feature>
<feature type="binding site" evidence="1">
    <location>
        <begin position="260"/>
        <end position="264"/>
    </location>
    <ligand>
        <name>FMN</name>
        <dbReference type="ChEBI" id="CHEBI:58210"/>
    </ligand>
</feature>
<feature type="binding site" evidence="1">
    <location>
        <begin position="342"/>
        <end position="369"/>
    </location>
    <ligand>
        <name>FMN</name>
        <dbReference type="ChEBI" id="CHEBI:58210"/>
    </ligand>
</feature>
<feature type="binding site" evidence="1">
    <location>
        <position position="462"/>
    </location>
    <ligand>
        <name>Fe cation</name>
        <dbReference type="ChEBI" id="CHEBI:24875"/>
        <label>3</label>
    </ligand>
</feature>
<feature type="binding site" evidence="1">
    <location>
        <position position="465"/>
    </location>
    <ligand>
        <name>Fe cation</name>
        <dbReference type="ChEBI" id="CHEBI:24875"/>
        <label>3</label>
    </ligand>
</feature>
<feature type="binding site" evidence="1">
    <location>
        <position position="495"/>
    </location>
    <ligand>
        <name>Fe cation</name>
        <dbReference type="ChEBI" id="CHEBI:24875"/>
        <label>3</label>
    </ligand>
</feature>
<feature type="binding site" evidence="1">
    <location>
        <position position="498"/>
    </location>
    <ligand>
        <name>Fe cation</name>
        <dbReference type="ChEBI" id="CHEBI:24875"/>
        <label>3</label>
    </ligand>
</feature>
<evidence type="ECO:0000255" key="1">
    <source>
        <dbReference type="HAMAP-Rule" id="MF_01312"/>
    </source>
</evidence>
<name>NORV_PECAS</name>
<accession>Q6D8S0</accession>
<dbReference type="EMBL" id="BX950851">
    <property type="protein sequence ID" value="CAG73814.1"/>
    <property type="molecule type" value="Genomic_DNA"/>
</dbReference>
<dbReference type="RefSeq" id="WP_011092504.1">
    <property type="nucleotide sequence ID" value="NC_004547.2"/>
</dbReference>
<dbReference type="SMR" id="Q6D8S0"/>
<dbReference type="STRING" id="218491.ECA0902"/>
<dbReference type="KEGG" id="eca:ECA0902"/>
<dbReference type="PATRIC" id="fig|218491.5.peg.906"/>
<dbReference type="eggNOG" id="COG0426">
    <property type="taxonomic scope" value="Bacteria"/>
</dbReference>
<dbReference type="eggNOG" id="COG1773">
    <property type="taxonomic scope" value="Bacteria"/>
</dbReference>
<dbReference type="HOGENOM" id="CLU_017490_0_1_6"/>
<dbReference type="OrthoDB" id="9800607at2"/>
<dbReference type="UniPathway" id="UPA00638"/>
<dbReference type="Proteomes" id="UP000007966">
    <property type="component" value="Chromosome"/>
</dbReference>
<dbReference type="GO" id="GO:0005737">
    <property type="term" value="C:cytoplasm"/>
    <property type="evidence" value="ECO:0007669"/>
    <property type="project" value="UniProtKB-SubCell"/>
</dbReference>
<dbReference type="GO" id="GO:0009055">
    <property type="term" value="F:electron transfer activity"/>
    <property type="evidence" value="ECO:0007669"/>
    <property type="project" value="UniProtKB-UniRule"/>
</dbReference>
<dbReference type="GO" id="GO:0010181">
    <property type="term" value="F:FMN binding"/>
    <property type="evidence" value="ECO:0007669"/>
    <property type="project" value="InterPro"/>
</dbReference>
<dbReference type="GO" id="GO:0005506">
    <property type="term" value="F:iron ion binding"/>
    <property type="evidence" value="ECO:0007669"/>
    <property type="project" value="InterPro"/>
</dbReference>
<dbReference type="GO" id="GO:0016966">
    <property type="term" value="F:nitric oxide reductase activity"/>
    <property type="evidence" value="ECO:0007669"/>
    <property type="project" value="InterPro"/>
</dbReference>
<dbReference type="CDD" id="cd07709">
    <property type="entry name" value="flavodiiron_proteins_MBL-fold"/>
    <property type="match status" value="1"/>
</dbReference>
<dbReference type="CDD" id="cd00730">
    <property type="entry name" value="rubredoxin"/>
    <property type="match status" value="1"/>
</dbReference>
<dbReference type="Gene3D" id="2.20.28.10">
    <property type="match status" value="1"/>
</dbReference>
<dbReference type="Gene3D" id="3.40.50.360">
    <property type="match status" value="1"/>
</dbReference>
<dbReference type="Gene3D" id="3.60.15.10">
    <property type="entry name" value="Ribonuclease Z/Hydroxyacylglutathione hydrolase-like"/>
    <property type="match status" value="1"/>
</dbReference>
<dbReference type="HAMAP" id="MF_01312">
    <property type="entry name" value="NorV"/>
    <property type="match status" value="1"/>
</dbReference>
<dbReference type="InterPro" id="IPR023957">
    <property type="entry name" value="Anaer_NO_rdtase_flvorubredoxin"/>
</dbReference>
<dbReference type="InterPro" id="IPR008254">
    <property type="entry name" value="Flavodoxin/NO_synth"/>
</dbReference>
<dbReference type="InterPro" id="IPR029039">
    <property type="entry name" value="Flavoprotein-like_sf"/>
</dbReference>
<dbReference type="InterPro" id="IPR001279">
    <property type="entry name" value="Metallo-B-lactamas"/>
</dbReference>
<dbReference type="InterPro" id="IPR045761">
    <property type="entry name" value="ODP_dom"/>
</dbReference>
<dbReference type="InterPro" id="IPR036866">
    <property type="entry name" value="RibonucZ/Hydroxyglut_hydro"/>
</dbReference>
<dbReference type="InterPro" id="IPR024934">
    <property type="entry name" value="Rubredoxin-like_dom"/>
</dbReference>
<dbReference type="InterPro" id="IPR024935">
    <property type="entry name" value="Rubredoxin_dom"/>
</dbReference>
<dbReference type="NCBIfam" id="NF003954">
    <property type="entry name" value="PRK05452.1"/>
    <property type="match status" value="1"/>
</dbReference>
<dbReference type="PANTHER" id="PTHR43717">
    <property type="entry name" value="ANAEROBIC NITRIC OXIDE REDUCTASE FLAVORUBREDOXIN"/>
    <property type="match status" value="1"/>
</dbReference>
<dbReference type="PANTHER" id="PTHR43717:SF1">
    <property type="entry name" value="ANAEROBIC NITRIC OXIDE REDUCTASE FLAVORUBREDOXIN"/>
    <property type="match status" value="1"/>
</dbReference>
<dbReference type="Pfam" id="PF00258">
    <property type="entry name" value="Flavodoxin_1"/>
    <property type="match status" value="1"/>
</dbReference>
<dbReference type="Pfam" id="PF19583">
    <property type="entry name" value="ODP"/>
    <property type="match status" value="1"/>
</dbReference>
<dbReference type="Pfam" id="PF00301">
    <property type="entry name" value="Rubredoxin"/>
    <property type="match status" value="1"/>
</dbReference>
<dbReference type="PRINTS" id="PR00163">
    <property type="entry name" value="RUBREDOXIN"/>
</dbReference>
<dbReference type="SMART" id="SM00849">
    <property type="entry name" value="Lactamase_B"/>
    <property type="match status" value="1"/>
</dbReference>
<dbReference type="SUPFAM" id="SSF52218">
    <property type="entry name" value="Flavoproteins"/>
    <property type="match status" value="1"/>
</dbReference>
<dbReference type="SUPFAM" id="SSF56281">
    <property type="entry name" value="Metallo-hydrolase/oxidoreductase"/>
    <property type="match status" value="1"/>
</dbReference>
<dbReference type="SUPFAM" id="SSF57802">
    <property type="entry name" value="Rubredoxin-like"/>
    <property type="match status" value="1"/>
</dbReference>
<dbReference type="PROSITE" id="PS50902">
    <property type="entry name" value="FLAVODOXIN_LIKE"/>
    <property type="match status" value="1"/>
</dbReference>
<dbReference type="PROSITE" id="PS50903">
    <property type="entry name" value="RUBREDOXIN_LIKE"/>
    <property type="match status" value="1"/>
</dbReference>
<keyword id="KW-0963">Cytoplasm</keyword>
<keyword id="KW-0249">Electron transport</keyword>
<keyword id="KW-0285">Flavoprotein</keyword>
<keyword id="KW-0288">FMN</keyword>
<keyword id="KW-0408">Iron</keyword>
<keyword id="KW-0479">Metal-binding</keyword>
<keyword id="KW-0560">Oxidoreductase</keyword>
<keyword id="KW-1185">Reference proteome</keyword>
<keyword id="KW-0813">Transport</keyword>
<protein>
    <recommendedName>
        <fullName evidence="1">Anaerobic nitric oxide reductase flavorubredoxin</fullName>
        <shortName evidence="1">FlRd</shortName>
        <shortName evidence="1">FlavoRb</shortName>
    </recommendedName>
</protein>
<organism>
    <name type="scientific">Pectobacterium atrosepticum (strain SCRI 1043 / ATCC BAA-672)</name>
    <name type="common">Erwinia carotovora subsp. atroseptica</name>
    <dbReference type="NCBI Taxonomy" id="218491"/>
    <lineage>
        <taxon>Bacteria</taxon>
        <taxon>Pseudomonadati</taxon>
        <taxon>Pseudomonadota</taxon>
        <taxon>Gammaproteobacteria</taxon>
        <taxon>Enterobacterales</taxon>
        <taxon>Pectobacteriaceae</taxon>
        <taxon>Pectobacterium</taxon>
    </lineage>
</organism>
<gene>
    <name evidence="1" type="primary">norV</name>
    <name evidence="1" type="synonym">flrD</name>
    <name type="ordered locus">ECA0902</name>
</gene>
<proteinExistence type="inferred from homology"/>